<sequence>MIENSFKMEMHFKNRWQAASLFLRYPRTVTLCLSGKSGDMDESVNLSTSMGDVEASMLNHNVSFSSTMVTSNGDLSLPKLSVTLSAEEILKLRSGRPKNAVESPHAGVPMETSLAAEEEANGDEEEESVRVVDIEDTLELTSNGNEAKPEDQELAIAPVLQYFQGALVELGRRCWTSSTEAQHYTKGCYWSPDGTCLLVPVHLDGMHVIEMPSDLYSADTVQPARSLTKLQSEVHVPEGGTVYDCVWYPHMNSLQPETCLWLATRQHEPIHMWDAFDGSLRCSYSGYDAVDEVMAAISLAFSHDGEQIYAGYKRCIKIFDTSRPGRFCDDYPVKFAISCIAQTTAHPHTLTCGNWHGYIQHFDLRCSHKQGPLFTLGGHKGGITQLRYGEFGNGEWHLFSGARKCDKILQWDMRNYKQPLVELQRHVDTNQRIQFDLASDSNWLASGDTRGFVNVWDLKKYGDPSVLPLHSDCCNGVALNPAMPILATSSGQFHFTDQSAQGDNVTLNGTETTELPAPADVNQNQKEVLYENAVVMWWCGQTG</sequence>
<reference key="1">
    <citation type="journal article" date="2000" name="Science">
        <title>The genome sequence of Drosophila melanogaster.</title>
        <authorList>
            <person name="Adams M.D."/>
            <person name="Celniker S.E."/>
            <person name="Holt R.A."/>
            <person name="Evans C.A."/>
            <person name="Gocayne J.D."/>
            <person name="Amanatides P.G."/>
            <person name="Scherer S.E."/>
            <person name="Li P.W."/>
            <person name="Hoskins R.A."/>
            <person name="Galle R.F."/>
            <person name="George R.A."/>
            <person name="Lewis S.E."/>
            <person name="Richards S."/>
            <person name="Ashburner M."/>
            <person name="Henderson S.N."/>
            <person name="Sutton G.G."/>
            <person name="Wortman J.R."/>
            <person name="Yandell M.D."/>
            <person name="Zhang Q."/>
            <person name="Chen L.X."/>
            <person name="Brandon R.C."/>
            <person name="Rogers Y.-H.C."/>
            <person name="Blazej R.G."/>
            <person name="Champe M."/>
            <person name="Pfeiffer B.D."/>
            <person name="Wan K.H."/>
            <person name="Doyle C."/>
            <person name="Baxter E.G."/>
            <person name="Helt G."/>
            <person name="Nelson C.R."/>
            <person name="Miklos G.L.G."/>
            <person name="Abril J.F."/>
            <person name="Agbayani A."/>
            <person name="An H.-J."/>
            <person name="Andrews-Pfannkoch C."/>
            <person name="Baldwin D."/>
            <person name="Ballew R.M."/>
            <person name="Basu A."/>
            <person name="Baxendale J."/>
            <person name="Bayraktaroglu L."/>
            <person name="Beasley E.M."/>
            <person name="Beeson K.Y."/>
            <person name="Benos P.V."/>
            <person name="Berman B.P."/>
            <person name="Bhandari D."/>
            <person name="Bolshakov S."/>
            <person name="Borkova D."/>
            <person name="Botchan M.R."/>
            <person name="Bouck J."/>
            <person name="Brokstein P."/>
            <person name="Brottier P."/>
            <person name="Burtis K.C."/>
            <person name="Busam D.A."/>
            <person name="Butler H."/>
            <person name="Cadieu E."/>
            <person name="Center A."/>
            <person name="Chandra I."/>
            <person name="Cherry J.M."/>
            <person name="Cawley S."/>
            <person name="Dahlke C."/>
            <person name="Davenport L.B."/>
            <person name="Davies P."/>
            <person name="de Pablos B."/>
            <person name="Delcher A."/>
            <person name="Deng Z."/>
            <person name="Mays A.D."/>
            <person name="Dew I."/>
            <person name="Dietz S.M."/>
            <person name="Dodson K."/>
            <person name="Doup L.E."/>
            <person name="Downes M."/>
            <person name="Dugan-Rocha S."/>
            <person name="Dunkov B.C."/>
            <person name="Dunn P."/>
            <person name="Durbin K.J."/>
            <person name="Evangelista C.C."/>
            <person name="Ferraz C."/>
            <person name="Ferriera S."/>
            <person name="Fleischmann W."/>
            <person name="Fosler C."/>
            <person name="Gabrielian A.E."/>
            <person name="Garg N.S."/>
            <person name="Gelbart W.M."/>
            <person name="Glasser K."/>
            <person name="Glodek A."/>
            <person name="Gong F."/>
            <person name="Gorrell J.H."/>
            <person name="Gu Z."/>
            <person name="Guan P."/>
            <person name="Harris M."/>
            <person name="Harris N.L."/>
            <person name="Harvey D.A."/>
            <person name="Heiman T.J."/>
            <person name="Hernandez J.R."/>
            <person name="Houck J."/>
            <person name="Hostin D."/>
            <person name="Houston K.A."/>
            <person name="Howland T.J."/>
            <person name="Wei M.-H."/>
            <person name="Ibegwam C."/>
            <person name="Jalali M."/>
            <person name="Kalush F."/>
            <person name="Karpen G.H."/>
            <person name="Ke Z."/>
            <person name="Kennison J.A."/>
            <person name="Ketchum K.A."/>
            <person name="Kimmel B.E."/>
            <person name="Kodira C.D."/>
            <person name="Kraft C.L."/>
            <person name="Kravitz S."/>
            <person name="Kulp D."/>
            <person name="Lai Z."/>
            <person name="Lasko P."/>
            <person name="Lei Y."/>
            <person name="Levitsky A.A."/>
            <person name="Li J.H."/>
            <person name="Li Z."/>
            <person name="Liang Y."/>
            <person name="Lin X."/>
            <person name="Liu X."/>
            <person name="Mattei B."/>
            <person name="McIntosh T.C."/>
            <person name="McLeod M.P."/>
            <person name="McPherson D."/>
            <person name="Merkulov G."/>
            <person name="Milshina N.V."/>
            <person name="Mobarry C."/>
            <person name="Morris J."/>
            <person name="Moshrefi A."/>
            <person name="Mount S.M."/>
            <person name="Moy M."/>
            <person name="Murphy B."/>
            <person name="Murphy L."/>
            <person name="Muzny D.M."/>
            <person name="Nelson D.L."/>
            <person name="Nelson D.R."/>
            <person name="Nelson K.A."/>
            <person name="Nixon K."/>
            <person name="Nusskern D.R."/>
            <person name="Pacleb J.M."/>
            <person name="Palazzolo M."/>
            <person name="Pittman G.S."/>
            <person name="Pan S."/>
            <person name="Pollard J."/>
            <person name="Puri V."/>
            <person name="Reese M.G."/>
            <person name="Reinert K."/>
            <person name="Remington K."/>
            <person name="Saunders R.D.C."/>
            <person name="Scheeler F."/>
            <person name="Shen H."/>
            <person name="Shue B.C."/>
            <person name="Siden-Kiamos I."/>
            <person name="Simpson M."/>
            <person name="Skupski M.P."/>
            <person name="Smith T.J."/>
            <person name="Spier E."/>
            <person name="Spradling A.C."/>
            <person name="Stapleton M."/>
            <person name="Strong R."/>
            <person name="Sun E."/>
            <person name="Svirskas R."/>
            <person name="Tector C."/>
            <person name="Turner R."/>
            <person name="Venter E."/>
            <person name="Wang A.H."/>
            <person name="Wang X."/>
            <person name="Wang Z.-Y."/>
            <person name="Wassarman D.A."/>
            <person name="Weinstock G.M."/>
            <person name="Weissenbach J."/>
            <person name="Williams S.M."/>
            <person name="Woodage T."/>
            <person name="Worley K.C."/>
            <person name="Wu D."/>
            <person name="Yang S."/>
            <person name="Yao Q.A."/>
            <person name="Ye J."/>
            <person name="Yeh R.-F."/>
            <person name="Zaveri J.S."/>
            <person name="Zhan M."/>
            <person name="Zhang G."/>
            <person name="Zhao Q."/>
            <person name="Zheng L."/>
            <person name="Zheng X.H."/>
            <person name="Zhong F.N."/>
            <person name="Zhong W."/>
            <person name="Zhou X."/>
            <person name="Zhu S.C."/>
            <person name="Zhu X."/>
            <person name="Smith H.O."/>
            <person name="Gibbs R.A."/>
            <person name="Myers E.W."/>
            <person name="Rubin G.M."/>
            <person name="Venter J.C."/>
        </authorList>
    </citation>
    <scope>NUCLEOTIDE SEQUENCE [LARGE SCALE GENOMIC DNA]</scope>
    <source>
        <strain>Berkeley</strain>
    </source>
</reference>
<reference key="2">
    <citation type="journal article" date="2002" name="Genome Biol.">
        <title>Annotation of the Drosophila melanogaster euchromatic genome: a systematic review.</title>
        <authorList>
            <person name="Misra S."/>
            <person name="Crosby M.A."/>
            <person name="Mungall C.J."/>
            <person name="Matthews B.B."/>
            <person name="Campbell K.S."/>
            <person name="Hradecky P."/>
            <person name="Huang Y."/>
            <person name="Kaminker J.S."/>
            <person name="Millburn G.H."/>
            <person name="Prochnik S.E."/>
            <person name="Smith C.D."/>
            <person name="Tupy J.L."/>
            <person name="Whitfield E.J."/>
            <person name="Bayraktaroglu L."/>
            <person name="Berman B.P."/>
            <person name="Bettencourt B.R."/>
            <person name="Celniker S.E."/>
            <person name="de Grey A.D.N.J."/>
            <person name="Drysdale R.A."/>
            <person name="Harris N.L."/>
            <person name="Richter J."/>
            <person name="Russo S."/>
            <person name="Schroeder A.J."/>
            <person name="Shu S.Q."/>
            <person name="Stapleton M."/>
            <person name="Yamada C."/>
            <person name="Ashburner M."/>
            <person name="Gelbart W.M."/>
            <person name="Rubin G.M."/>
            <person name="Lewis S.E."/>
        </authorList>
    </citation>
    <scope>GENOME REANNOTATION</scope>
    <source>
        <strain>Berkeley</strain>
    </source>
</reference>
<reference key="3">
    <citation type="submission" date="2004-04" db="EMBL/GenBank/DDBJ databases">
        <authorList>
            <person name="Stapleton M."/>
            <person name="Carlson J."/>
            <person name="Chavez C."/>
            <person name="Frise E."/>
            <person name="George R."/>
            <person name="Pacleb J."/>
            <person name="Park S."/>
            <person name="Wan K."/>
            <person name="Yu C."/>
            <person name="Rubin G.M."/>
            <person name="Celniker S."/>
        </authorList>
    </citation>
    <scope>NUCLEOTIDE SEQUENCE [LARGE SCALE MRNA]</scope>
    <source>
        <tissue>Testis</tissue>
    </source>
</reference>
<reference key="4">
    <citation type="journal article" date="2009" name="Mol. Cell">
        <title>A conserved WD40 protein binds the Cajal body localization signal of scaRNP particles.</title>
        <authorList>
            <person name="Tycowski K.T."/>
            <person name="Shu M.D."/>
            <person name="Kukoyi A."/>
            <person name="Steitz J.A."/>
        </authorList>
    </citation>
    <scope>IDENTIFICATION BY MASS SPECTROMETRY</scope>
    <scope>FUNCTION</scope>
    <scope>RNA-BINDING</scope>
</reference>
<reference key="5">
    <citation type="journal article" date="2013" name="RNA">
        <title>Novel small Cajal-body-specific RNAs identified in Drosophila: probing guide RNA function.</title>
        <authorList>
            <person name="Deryusheva S."/>
            <person name="Gall J.G."/>
        </authorList>
    </citation>
    <scope>FUNCTION</scope>
    <scope>SUBCELLULAR LOCATION</scope>
</reference>
<accession>Q6NL34</accession>
<accession>Q960H9</accession>
<accession>Q9VMH1</accession>
<organism>
    <name type="scientific">Drosophila melanogaster</name>
    <name type="common">Fruit fly</name>
    <dbReference type="NCBI Taxonomy" id="7227"/>
    <lineage>
        <taxon>Eukaryota</taxon>
        <taxon>Metazoa</taxon>
        <taxon>Ecdysozoa</taxon>
        <taxon>Arthropoda</taxon>
        <taxon>Hexapoda</taxon>
        <taxon>Insecta</taxon>
        <taxon>Pterygota</taxon>
        <taxon>Neoptera</taxon>
        <taxon>Endopterygota</taxon>
        <taxon>Diptera</taxon>
        <taxon>Brachycera</taxon>
        <taxon>Muscomorpha</taxon>
        <taxon>Ephydroidea</taxon>
        <taxon>Drosophilidae</taxon>
        <taxon>Drosophila</taxon>
        <taxon>Sophophora</taxon>
    </lineage>
</organism>
<keyword id="KW-0025">Alternative splicing</keyword>
<keyword id="KW-0143">Chaperone</keyword>
<keyword id="KW-0539">Nucleus</keyword>
<keyword id="KW-1185">Reference proteome</keyword>
<keyword id="KW-0677">Repeat</keyword>
<keyword id="KW-0694">RNA-binding</keyword>
<keyword id="KW-0853">WD repeat</keyword>
<feature type="chain" id="PRO_0000445072" description="Telomerase Cajal body protein 1 homolog">
    <location>
        <begin position="1"/>
        <end position="543"/>
    </location>
</feature>
<feature type="repeat" description="WD 1" evidence="1">
    <location>
        <begin position="237"/>
        <end position="283"/>
    </location>
</feature>
<feature type="repeat" description="WD 2" evidence="1">
    <location>
        <begin position="291"/>
        <end position="329"/>
    </location>
</feature>
<feature type="repeat" description="WD 3" evidence="1">
    <location>
        <begin position="378"/>
        <end position="421"/>
    </location>
</feature>
<feature type="region of interest" description="Disordered" evidence="2">
    <location>
        <begin position="95"/>
        <end position="128"/>
    </location>
</feature>
<feature type="compositionally biased region" description="Acidic residues" evidence="2">
    <location>
        <begin position="116"/>
        <end position="127"/>
    </location>
</feature>
<feature type="splice variant" id="VSP_059806" description="In isoform B.">
    <location>
        <begin position="1"/>
        <end position="39"/>
    </location>
</feature>
<evidence type="ECO:0000255" key="1"/>
<evidence type="ECO:0000256" key="2">
    <source>
        <dbReference type="SAM" id="MobiDB-lite"/>
    </source>
</evidence>
<evidence type="ECO:0000269" key="3">
    <source>
    </source>
</evidence>
<evidence type="ECO:0000269" key="4">
    <source>
    </source>
</evidence>
<evidence type="ECO:0000303" key="5">
    <source>
    </source>
</evidence>
<evidence type="ECO:0000305" key="6"/>
<evidence type="ECO:0000312" key="7">
    <source>
        <dbReference type="FlyBase" id="FBgn0031782"/>
    </source>
</evidence>
<dbReference type="EMBL" id="AE014134">
    <property type="protein sequence ID" value="AAF52347.3"/>
    <property type="molecule type" value="Genomic_DNA"/>
</dbReference>
<dbReference type="EMBL" id="AE014134">
    <property type="protein sequence ID" value="AHN54180.1"/>
    <property type="molecule type" value="Genomic_DNA"/>
</dbReference>
<dbReference type="EMBL" id="AY052052">
    <property type="protein sequence ID" value="AAK93476.2"/>
    <property type="molecule type" value="mRNA"/>
</dbReference>
<dbReference type="EMBL" id="BT012509">
    <property type="protein sequence ID" value="AAS93780.1"/>
    <property type="molecule type" value="mRNA"/>
</dbReference>
<dbReference type="RefSeq" id="NP_001285665.1">
    <molecule id="Q6NL34-1"/>
    <property type="nucleotide sequence ID" value="NM_001298736.1"/>
</dbReference>
<dbReference type="RefSeq" id="NP_608997.3">
    <molecule id="Q6NL34-2"/>
    <property type="nucleotide sequence ID" value="NM_135153.4"/>
</dbReference>
<dbReference type="SMR" id="Q6NL34"/>
<dbReference type="FunCoup" id="Q6NL34">
    <property type="interactions" value="1777"/>
</dbReference>
<dbReference type="IntAct" id="Q6NL34">
    <property type="interactions" value="3"/>
</dbReference>
<dbReference type="STRING" id="7227.FBpp0312024"/>
<dbReference type="PaxDb" id="7227-FBpp0305599"/>
<dbReference type="DNASU" id="33865"/>
<dbReference type="EnsemblMetazoa" id="FBtr0333407">
    <molecule id="Q6NL34-2"/>
    <property type="protein sequence ID" value="FBpp0305599"/>
    <property type="gene ID" value="FBgn0031782"/>
</dbReference>
<dbReference type="EnsemblMetazoa" id="FBtr0346267">
    <molecule id="Q6NL34-1"/>
    <property type="protein sequence ID" value="FBpp0312024"/>
    <property type="gene ID" value="FBgn0031782"/>
</dbReference>
<dbReference type="GeneID" id="33865"/>
<dbReference type="KEGG" id="dme:Dmel_CG9226"/>
<dbReference type="UCSC" id="CG9226-RA">
    <property type="organism name" value="d. melanogaster"/>
</dbReference>
<dbReference type="AGR" id="FB:FBgn0031782"/>
<dbReference type="CTD" id="33865"/>
<dbReference type="FlyBase" id="FBgn0031782">
    <property type="gene designation" value="WDR79"/>
</dbReference>
<dbReference type="VEuPathDB" id="VectorBase:FBgn0031782"/>
<dbReference type="eggNOG" id="KOG2919">
    <property type="taxonomic scope" value="Eukaryota"/>
</dbReference>
<dbReference type="GeneTree" id="ENSGT00390000010169"/>
<dbReference type="HOGENOM" id="CLU_022731_1_2_1"/>
<dbReference type="InParanoid" id="Q6NL34"/>
<dbReference type="OMA" id="PKLLQWD"/>
<dbReference type="OrthoDB" id="239865at2759"/>
<dbReference type="PhylomeDB" id="Q6NL34"/>
<dbReference type="BioGRID-ORCS" id="33865">
    <property type="hits" value="0 hits in 1 CRISPR screen"/>
</dbReference>
<dbReference type="GenomeRNAi" id="33865"/>
<dbReference type="PRO" id="PR:Q6NL34"/>
<dbReference type="Proteomes" id="UP000000803">
    <property type="component" value="Chromosome 2L"/>
</dbReference>
<dbReference type="Bgee" id="FBgn0031782">
    <property type="expression patterns" value="Expressed in adult middle midgut class II enteroendocrine cell in adult midgut (Drosophila) and 36 other cell types or tissues"/>
</dbReference>
<dbReference type="ExpressionAtlas" id="Q6NL34">
    <property type="expression patterns" value="baseline and differential"/>
</dbReference>
<dbReference type="GO" id="GO:0015030">
    <property type="term" value="C:Cajal body"/>
    <property type="evidence" value="ECO:0000314"/>
    <property type="project" value="FlyBase"/>
</dbReference>
<dbReference type="GO" id="GO:0034512">
    <property type="term" value="F:box C/D sno(s)RNA binding"/>
    <property type="evidence" value="ECO:0000314"/>
    <property type="project" value="FlyBase"/>
</dbReference>
<dbReference type="GO" id="GO:0140517">
    <property type="term" value="F:protein-RNA adaptor activity"/>
    <property type="evidence" value="ECO:0000314"/>
    <property type="project" value="FlyBase"/>
</dbReference>
<dbReference type="GO" id="GO:0003723">
    <property type="term" value="F:RNA binding"/>
    <property type="evidence" value="ECO:0000318"/>
    <property type="project" value="GO_Central"/>
</dbReference>
<dbReference type="GO" id="GO:0030576">
    <property type="term" value="P:Cajal body organization"/>
    <property type="evidence" value="ECO:0000315"/>
    <property type="project" value="FlyBase"/>
</dbReference>
<dbReference type="Gene3D" id="2.130.10.10">
    <property type="entry name" value="YVTN repeat-like/Quinoprotein amine dehydrogenase"/>
    <property type="match status" value="2"/>
</dbReference>
<dbReference type="InterPro" id="IPR051150">
    <property type="entry name" value="SWT21/TCAB1_mRNA_Telomere"/>
</dbReference>
<dbReference type="InterPro" id="IPR015943">
    <property type="entry name" value="WD40/YVTN_repeat-like_dom_sf"/>
</dbReference>
<dbReference type="InterPro" id="IPR036322">
    <property type="entry name" value="WD40_repeat_dom_sf"/>
</dbReference>
<dbReference type="InterPro" id="IPR001680">
    <property type="entry name" value="WD40_rpt"/>
</dbReference>
<dbReference type="PANTHER" id="PTHR13211">
    <property type="entry name" value="TELOMERASE CAJAL BODY PROTEIN 1"/>
    <property type="match status" value="1"/>
</dbReference>
<dbReference type="PANTHER" id="PTHR13211:SF0">
    <property type="entry name" value="TELOMERASE CAJAL BODY PROTEIN 1"/>
    <property type="match status" value="1"/>
</dbReference>
<dbReference type="SMART" id="SM00320">
    <property type="entry name" value="WD40"/>
    <property type="match status" value="4"/>
</dbReference>
<dbReference type="SUPFAM" id="SSF50978">
    <property type="entry name" value="WD40 repeat-like"/>
    <property type="match status" value="1"/>
</dbReference>
<gene>
    <name evidence="5 7" type="primary">WDR79</name>
    <name evidence="7" type="ORF">CG9226</name>
</gene>
<name>TCAB1_DROME</name>
<comment type="function">
    <text evidence="3 4">RNA chaperone that plays a key role in Cajal body formation (PubMed:24149844). Specifically recognizes and binds the Cajal body box (CAB box) present in both small Cajal body RNAs (scaRNAs) (PubMed:19285445). Probably acts by mediating localization of scaRNAs to Cajal bodies (PubMed:24149844).</text>
</comment>
<comment type="subcellular location">
    <subcellularLocation>
        <location evidence="4">Nucleus</location>
        <location evidence="4">Cajal body</location>
    </subcellularLocation>
</comment>
<comment type="alternative products">
    <event type="alternative splicing"/>
    <isoform>
        <id>Q6NL34-1</id>
        <name>C</name>
        <sequence type="displayed"/>
    </isoform>
    <isoform>
        <id>Q6NL34-2</id>
        <name>B</name>
        <sequence type="described" ref="VSP_059806"/>
    </isoform>
</comment>
<comment type="similarity">
    <text evidence="6">Belongs to the TCAB1 family.</text>
</comment>
<protein>
    <recommendedName>
        <fullName evidence="6">Telomerase Cajal body protein 1 homolog</fullName>
    </recommendedName>
    <alternativeName>
        <fullName evidence="5">WD repeat-containing protein 79</fullName>
    </alternativeName>
</protein>
<proteinExistence type="evidence at protein level"/>